<gene>
    <name type="primary">pgbA</name>
    <name type="ordered locus">HP_0508</name>
</gene>
<proteinExistence type="evidence at protein level"/>
<comment type="function">
    <text>Binds plasminogen, specifically, and in a concentration and lysine-dependent manner. Plasminogen is the precursor of plasmin, a serine protease that cleaves fibrin, fibronectin, laminin and vitronectin. Acquisition of plasminogen/plasmin could enable H.pylori to degrade host components.</text>
</comment>
<comment type="subcellular location">
    <subcellularLocation>
        <location evidence="2">Cell surface</location>
    </subcellularLocation>
    <text evidence="2">The plasminogen-binding region is localized on the surface the bacterium.</text>
</comment>
<comment type="miscellaneous">
    <text>Plasminogen bound to PgbA is capable of being converted to functionally active plasmin.</text>
</comment>
<reference key="1">
    <citation type="journal article" date="1997" name="Nature">
        <title>The complete genome sequence of the gastric pathogen Helicobacter pylori.</title>
        <authorList>
            <person name="Tomb J.-F."/>
            <person name="White O."/>
            <person name="Kerlavage A.R."/>
            <person name="Clayton R.A."/>
            <person name="Sutton G.G."/>
            <person name="Fleischmann R.D."/>
            <person name="Ketchum K.A."/>
            <person name="Klenk H.-P."/>
            <person name="Gill S.R."/>
            <person name="Dougherty B.A."/>
            <person name="Nelson K.E."/>
            <person name="Quackenbush J."/>
            <person name="Zhou L."/>
            <person name="Kirkness E.F."/>
            <person name="Peterson S.N."/>
            <person name="Loftus B.J."/>
            <person name="Richardson D.L."/>
            <person name="Dodson R.J."/>
            <person name="Khalak H.G."/>
            <person name="Glodek A."/>
            <person name="McKenney K."/>
            <person name="FitzGerald L.M."/>
            <person name="Lee N."/>
            <person name="Adams M.D."/>
            <person name="Hickey E.K."/>
            <person name="Berg D.E."/>
            <person name="Gocayne J.D."/>
            <person name="Utterback T.R."/>
            <person name="Peterson J.D."/>
            <person name="Kelley J.M."/>
            <person name="Cotton M.D."/>
            <person name="Weidman J.F."/>
            <person name="Fujii C."/>
            <person name="Bowman C."/>
            <person name="Watthey L."/>
            <person name="Wallin E."/>
            <person name="Hayes W.S."/>
            <person name="Borodovsky M."/>
            <person name="Karp P.D."/>
            <person name="Smith H.O."/>
            <person name="Fraser C.M."/>
            <person name="Venter J.C."/>
        </authorList>
    </citation>
    <scope>NUCLEOTIDE SEQUENCE [LARGE SCALE GENOMIC DNA]</scope>
    <source>
        <strain>ATCC 700392 / 26695</strain>
    </source>
</reference>
<reference key="2">
    <citation type="journal article" date="2004" name="Proc. Natl. Acad. Sci. U.S.A.">
        <title>Molecular cloning and characterization of two Helicobacter pylori genes coding for plasminogen-binding proteins.</title>
        <authorList>
            <person name="Joensson K."/>
            <person name="Guo B.P."/>
            <person name="Monstein H.J."/>
            <person name="Mekalanos J.J."/>
            <person name="Kronvall G."/>
        </authorList>
    </citation>
    <scope>NUCLEOTIDE SEQUENCE [GENOMIC DNA]</scope>
    <scope>PLASMINOGEN-BINDING ACTIVITY</scope>
    <source>
        <strain>ATCC 700392 / 26695</strain>
        <strain>DSM 4867 / CCUG 17874 / NCTC 11638</strain>
    </source>
</reference>
<name>PGBA_HELPY</name>
<accession>O25249</accession>
<accession>Q70SU1</accession>
<dbReference type="EMBL" id="AE000511">
    <property type="protein sequence ID" value="AAD07578.1"/>
    <property type="molecule type" value="Genomic_DNA"/>
</dbReference>
<dbReference type="EMBL" id="AJ550456">
    <property type="protein sequence ID" value="CAD79440.1"/>
    <property type="molecule type" value="Genomic_DNA"/>
</dbReference>
<dbReference type="PIR" id="D64583">
    <property type="entry name" value="D64583"/>
</dbReference>
<dbReference type="RefSeq" id="NP_207305.1">
    <property type="nucleotide sequence ID" value="NC_000915.1"/>
</dbReference>
<dbReference type="RefSeq" id="WP_000945103.1">
    <property type="nucleotide sequence ID" value="NC_018939.1"/>
</dbReference>
<dbReference type="SMR" id="O25249"/>
<dbReference type="STRING" id="85962.HP_0508"/>
<dbReference type="PaxDb" id="85962-C694_02610"/>
<dbReference type="EnsemblBacteria" id="AAD07578">
    <property type="protein sequence ID" value="AAD07578"/>
    <property type="gene ID" value="HP_0508"/>
</dbReference>
<dbReference type="KEGG" id="heo:C694_02610"/>
<dbReference type="KEGG" id="hpy:HP_0508"/>
<dbReference type="PATRIC" id="fig|85962.47.peg.546"/>
<dbReference type="InParanoid" id="O25249"/>
<dbReference type="OrthoDB" id="5372482at2"/>
<dbReference type="Proteomes" id="UP000000429">
    <property type="component" value="Chromosome"/>
</dbReference>
<dbReference type="GO" id="GO:0009986">
    <property type="term" value="C:cell surface"/>
    <property type="evidence" value="ECO:0007669"/>
    <property type="project" value="UniProtKB-SubCell"/>
</dbReference>
<dbReference type="InterPro" id="IPR032737">
    <property type="entry name" value="PGBA_C"/>
</dbReference>
<dbReference type="InterPro" id="IPR029276">
    <property type="entry name" value="PgbA_N"/>
</dbReference>
<dbReference type="Pfam" id="PF15437">
    <property type="entry name" value="PGBA_C"/>
    <property type="match status" value="2"/>
</dbReference>
<dbReference type="Pfam" id="PF15436">
    <property type="entry name" value="PGBA_N"/>
    <property type="match status" value="1"/>
</dbReference>
<keyword id="KW-1185">Reference proteome</keyword>
<protein>
    <recommendedName>
        <fullName>Plasminogen-binding protein PgbA</fullName>
    </recommendedName>
</protein>
<feature type="chain" id="PRO_0000058351" description="Plasminogen-binding protein PgbA">
    <location>
        <begin position="1"/>
        <end position="452"/>
    </location>
</feature>
<feature type="region of interest" description="Disordered" evidence="1">
    <location>
        <begin position="265"/>
        <end position="452"/>
    </location>
</feature>
<feature type="compositionally biased region" description="Basic and acidic residues" evidence="1">
    <location>
        <begin position="284"/>
        <end position="310"/>
    </location>
</feature>
<feature type="compositionally biased region" description="Basic and acidic residues" evidence="1">
    <location>
        <begin position="317"/>
        <end position="373"/>
    </location>
</feature>
<feature type="compositionally biased region" description="Polar residues" evidence="1">
    <location>
        <begin position="374"/>
        <end position="391"/>
    </location>
</feature>
<feature type="compositionally biased region" description="Basic and acidic residues" evidence="1">
    <location>
        <begin position="392"/>
        <end position="452"/>
    </location>
</feature>
<feature type="sequence variant" description="In strain: CCUG 17874.">
    <original>R</original>
    <variation>S</variation>
    <location>
        <position position="91"/>
    </location>
</feature>
<feature type="sequence variant" description="In strain: CCUG 17874.">
    <location>
        <position position="138"/>
    </location>
</feature>
<feature type="sequence variant" description="In strain: CCUG 17874.">
    <original>T</original>
    <variation>I</variation>
    <location>
        <position position="199"/>
    </location>
</feature>
<feature type="sequence variant" description="In strain: CCUG 17874.">
    <original>E</original>
    <variation>G</variation>
    <location>
        <position position="252"/>
    </location>
</feature>
<feature type="sequence variant" description="In strain: CCUG 17874.">
    <original>Q</original>
    <variation>E</variation>
    <location>
        <position position="279"/>
    </location>
</feature>
<feature type="sequence variant" description="In strain: CCUG 17874.">
    <original>D</original>
    <variation>N</variation>
    <location>
        <position position="349"/>
    </location>
</feature>
<feature type="sequence variant" description="In strain: CCUG 17874.">
    <location>
        <begin position="350"/>
        <end position="352"/>
    </location>
</feature>
<feature type="sequence variant" description="In strain: CCUG 17874.">
    <original>R</original>
    <variation>K</variation>
    <location>
        <position position="354"/>
    </location>
</feature>
<feature type="sequence variant" description="In strain: CCUG 17874.">
    <original>KP</original>
    <variation>NA</variation>
    <location>
        <begin position="356"/>
        <end position="357"/>
    </location>
</feature>
<feature type="sequence variant" description="In strain: CCUG 17874.">
    <original>SD</original>
    <variation>DN</variation>
    <location>
        <begin position="373"/>
        <end position="374"/>
    </location>
</feature>
<feature type="sequence variant" description="In strain: CCUG 17874.">
    <original>Q</original>
    <variation>S</variation>
    <location>
        <position position="394"/>
    </location>
</feature>
<feature type="sequence variant" description="In strain: CCUG 17874.">
    <original>N</original>
    <variation>K</variation>
    <location>
        <position position="398"/>
    </location>
</feature>
<feature type="sequence variant" description="In strain: CCUG 17874.">
    <original>AG</original>
    <variation>MN</variation>
    <location>
        <begin position="449"/>
        <end position="450"/>
    </location>
</feature>
<sequence length="452" mass="52656">MLRLLIGLLLMSFISLQSASWQEPLRVSIEFVDLPKKIIRFPAHDLQVGEFGFVVTKLSDYEIVNSEVVIIAVENGVATAKFRAFESMKQRHLPTPRMVARKGDLVYFRQFNNQAFLIAPNDELYEQIRATNTDINFISSDLLVTFLNGFDPKIANLRKACNVYSVGVIYIVTTNTLNILSCESFEILEKRELDTSGVTKTSTPFFSRVEGIDAGTLGKLFSGSQSKNYFAYYDALVKKEKRKEVRIKKREEKIDSREIKREIKQEAIKEPKKANQGTQNAPTLEEKNYQKAERKLDAKEERRYLRDERKKAKATKKAMEFEEREKEHDERDEQETEGRRKALEMDKGDKKEERVKPKENEREIKQEAIKEPSDGNNATQQGEKQNAPKENNAQKEENKPNSKEEKRRLKEEKKKAKAEQRAREFEQRAREHQERDEKELEERRKALEAGKK</sequence>
<evidence type="ECO:0000256" key="1">
    <source>
        <dbReference type="SAM" id="MobiDB-lite"/>
    </source>
</evidence>
<evidence type="ECO:0000305" key="2"/>
<organism>
    <name type="scientific">Helicobacter pylori (strain ATCC 700392 / 26695)</name>
    <name type="common">Campylobacter pylori</name>
    <dbReference type="NCBI Taxonomy" id="85962"/>
    <lineage>
        <taxon>Bacteria</taxon>
        <taxon>Pseudomonadati</taxon>
        <taxon>Campylobacterota</taxon>
        <taxon>Epsilonproteobacteria</taxon>
        <taxon>Campylobacterales</taxon>
        <taxon>Helicobacteraceae</taxon>
        <taxon>Helicobacter</taxon>
    </lineage>
</organism>